<name>HSLO_NOSS1</name>
<organism>
    <name type="scientific">Nostoc sp. (strain PCC 7120 / SAG 25.82 / UTEX 2576)</name>
    <dbReference type="NCBI Taxonomy" id="103690"/>
    <lineage>
        <taxon>Bacteria</taxon>
        <taxon>Bacillati</taxon>
        <taxon>Cyanobacteriota</taxon>
        <taxon>Cyanophyceae</taxon>
        <taxon>Nostocales</taxon>
        <taxon>Nostocaceae</taxon>
        <taxon>Nostoc</taxon>
    </lineage>
</organism>
<evidence type="ECO:0000255" key="1">
    <source>
        <dbReference type="HAMAP-Rule" id="MF_00117"/>
    </source>
</evidence>
<dbReference type="EMBL" id="BA000019">
    <property type="protein sequence ID" value="BAB77954.1"/>
    <property type="molecule type" value="Genomic_DNA"/>
</dbReference>
<dbReference type="PIR" id="AF2004">
    <property type="entry name" value="AF2004"/>
</dbReference>
<dbReference type="RefSeq" id="WP_010995757.1">
    <property type="nucleotide sequence ID" value="NZ_RSCN01000041.1"/>
</dbReference>
<dbReference type="SMR" id="Q8YWL7"/>
<dbReference type="STRING" id="103690.gene:10493604"/>
<dbReference type="KEGG" id="ana:all1588"/>
<dbReference type="eggNOG" id="COG1281">
    <property type="taxonomic scope" value="Bacteria"/>
</dbReference>
<dbReference type="OrthoDB" id="9776534at2"/>
<dbReference type="Proteomes" id="UP000002483">
    <property type="component" value="Chromosome"/>
</dbReference>
<dbReference type="GO" id="GO:0005737">
    <property type="term" value="C:cytoplasm"/>
    <property type="evidence" value="ECO:0007669"/>
    <property type="project" value="UniProtKB-SubCell"/>
</dbReference>
<dbReference type="GO" id="GO:0044183">
    <property type="term" value="F:protein folding chaperone"/>
    <property type="evidence" value="ECO:0007669"/>
    <property type="project" value="TreeGrafter"/>
</dbReference>
<dbReference type="GO" id="GO:0051082">
    <property type="term" value="F:unfolded protein binding"/>
    <property type="evidence" value="ECO:0007669"/>
    <property type="project" value="UniProtKB-UniRule"/>
</dbReference>
<dbReference type="GO" id="GO:0042026">
    <property type="term" value="P:protein refolding"/>
    <property type="evidence" value="ECO:0007669"/>
    <property type="project" value="TreeGrafter"/>
</dbReference>
<dbReference type="CDD" id="cd00498">
    <property type="entry name" value="Hsp33"/>
    <property type="match status" value="1"/>
</dbReference>
<dbReference type="Gene3D" id="3.55.30.10">
    <property type="entry name" value="Hsp33 domain"/>
    <property type="match status" value="1"/>
</dbReference>
<dbReference type="Gene3D" id="3.90.1280.10">
    <property type="entry name" value="HSP33 redox switch-like"/>
    <property type="match status" value="1"/>
</dbReference>
<dbReference type="HAMAP" id="MF_00117">
    <property type="entry name" value="HslO"/>
    <property type="match status" value="1"/>
</dbReference>
<dbReference type="InterPro" id="IPR000397">
    <property type="entry name" value="Heat_shock_Hsp33"/>
</dbReference>
<dbReference type="InterPro" id="IPR016154">
    <property type="entry name" value="Heat_shock_Hsp33_C"/>
</dbReference>
<dbReference type="InterPro" id="IPR016153">
    <property type="entry name" value="Heat_shock_Hsp33_N"/>
</dbReference>
<dbReference type="NCBIfam" id="NF001033">
    <property type="entry name" value="PRK00114.1"/>
    <property type="match status" value="1"/>
</dbReference>
<dbReference type="PANTHER" id="PTHR30111">
    <property type="entry name" value="33 KDA CHAPERONIN"/>
    <property type="match status" value="1"/>
</dbReference>
<dbReference type="PANTHER" id="PTHR30111:SF1">
    <property type="entry name" value="33 KDA CHAPERONIN"/>
    <property type="match status" value="1"/>
</dbReference>
<dbReference type="Pfam" id="PF01430">
    <property type="entry name" value="HSP33"/>
    <property type="match status" value="1"/>
</dbReference>
<dbReference type="PIRSF" id="PIRSF005261">
    <property type="entry name" value="Heat_shock_Hsp33"/>
    <property type="match status" value="1"/>
</dbReference>
<dbReference type="SUPFAM" id="SSF64397">
    <property type="entry name" value="Hsp33 domain"/>
    <property type="match status" value="1"/>
</dbReference>
<dbReference type="SUPFAM" id="SSF118352">
    <property type="entry name" value="HSP33 redox switch-like"/>
    <property type="match status" value="1"/>
</dbReference>
<keyword id="KW-0143">Chaperone</keyword>
<keyword id="KW-0963">Cytoplasm</keyword>
<keyword id="KW-1015">Disulfide bond</keyword>
<keyword id="KW-0676">Redox-active center</keyword>
<keyword id="KW-1185">Reference proteome</keyword>
<keyword id="KW-0862">Zinc</keyword>
<sequence>MADQLIRATAADGGIRAVGVITTRLTEEARQRHKLSYVATAALGRTMAAGLLMASGMKRVGSRVNVRVKGDGPLAGILVDAGLDGTVRGYVGNPHIELPPNAKGKLDVGGAVGNGYLYVVRDIGYGYPYSSTVELVSGEIGDDVAHYLVTSEQTPSALMLGVFVGASGVTAAGGLLVQVLPKAARDEALVAKLESRVGALSGFTPLLQAGKTLPEIFHDLLGDMGLTIFPESQILRFHCGCSFDRVLGALKMLGEAELQDMIVKDDGAEATCDFCGRVYQASSEHLAQLIVDLQTESSVSG</sequence>
<comment type="function">
    <text evidence="1">Redox regulated molecular chaperone. Protects both thermally unfolding and oxidatively damaged proteins from irreversible aggregation. Plays an important role in the bacterial defense system toward oxidative stress.</text>
</comment>
<comment type="subcellular location">
    <subcellularLocation>
        <location evidence="1">Cytoplasm</location>
    </subcellularLocation>
</comment>
<comment type="PTM">
    <text evidence="1">Under oxidizing conditions two disulfide bonds are formed involving the reactive cysteines. Under reducing conditions zinc is bound to the reactive cysteines and the protein is inactive.</text>
</comment>
<comment type="similarity">
    <text evidence="1">Belongs to the HSP33 family.</text>
</comment>
<proteinExistence type="inferred from homology"/>
<feature type="chain" id="PRO_0000192161" description="33 kDa chaperonin">
    <location>
        <begin position="1"/>
        <end position="301"/>
    </location>
</feature>
<feature type="disulfide bond" description="Redox-active" evidence="1">
    <location>
        <begin position="239"/>
        <end position="241"/>
    </location>
</feature>
<feature type="disulfide bond" description="Redox-active" evidence="1">
    <location>
        <begin position="272"/>
        <end position="275"/>
    </location>
</feature>
<reference key="1">
    <citation type="journal article" date="2001" name="DNA Res.">
        <title>Complete genomic sequence of the filamentous nitrogen-fixing cyanobacterium Anabaena sp. strain PCC 7120.</title>
        <authorList>
            <person name="Kaneko T."/>
            <person name="Nakamura Y."/>
            <person name="Wolk C.P."/>
            <person name="Kuritz T."/>
            <person name="Sasamoto S."/>
            <person name="Watanabe A."/>
            <person name="Iriguchi M."/>
            <person name="Ishikawa A."/>
            <person name="Kawashima K."/>
            <person name="Kimura T."/>
            <person name="Kishida Y."/>
            <person name="Kohara M."/>
            <person name="Matsumoto M."/>
            <person name="Matsuno A."/>
            <person name="Muraki A."/>
            <person name="Nakazaki N."/>
            <person name="Shimpo S."/>
            <person name="Sugimoto M."/>
            <person name="Takazawa M."/>
            <person name="Yamada M."/>
            <person name="Yasuda M."/>
            <person name="Tabata S."/>
        </authorList>
    </citation>
    <scope>NUCLEOTIDE SEQUENCE [LARGE SCALE GENOMIC DNA]</scope>
    <source>
        <strain>PCC 7120 / SAG 25.82 / UTEX 2576</strain>
    </source>
</reference>
<gene>
    <name evidence="1" type="primary">hslO</name>
    <name type="ordered locus">all1588</name>
</gene>
<accession>Q8YWL7</accession>
<protein>
    <recommendedName>
        <fullName evidence="1">33 kDa chaperonin</fullName>
    </recommendedName>
    <alternativeName>
        <fullName evidence="1">Heat shock protein 33 homolog</fullName>
        <shortName evidence="1">HSP33</shortName>
    </alternativeName>
</protein>